<name>KRUP_MANSE</name>
<protein>
    <recommendedName>
        <fullName>Protein krueppel</fullName>
    </recommendedName>
</protein>
<dbReference type="EMBL" id="Z30278">
    <property type="protein sequence ID" value="CAA82952.1"/>
    <property type="molecule type" value="Genomic_DNA"/>
</dbReference>
<dbReference type="SMR" id="Q25515"/>
<dbReference type="EnsemblMetazoa" id="XM_030172343.2">
    <property type="protein sequence ID" value="XP_030028203.1"/>
    <property type="gene ID" value="LOC115445865"/>
</dbReference>
<dbReference type="OrthoDB" id="654211at2759"/>
<dbReference type="GO" id="GO:0005634">
    <property type="term" value="C:nucleus"/>
    <property type="evidence" value="ECO:0007669"/>
    <property type="project" value="UniProtKB-SubCell"/>
</dbReference>
<dbReference type="GO" id="GO:0003677">
    <property type="term" value="F:DNA binding"/>
    <property type="evidence" value="ECO:0007669"/>
    <property type="project" value="UniProtKB-KW"/>
</dbReference>
<dbReference type="GO" id="GO:0008270">
    <property type="term" value="F:zinc ion binding"/>
    <property type="evidence" value="ECO:0007669"/>
    <property type="project" value="UniProtKB-KW"/>
</dbReference>
<dbReference type="GO" id="GO:0010468">
    <property type="term" value="P:regulation of gene expression"/>
    <property type="evidence" value="ECO:0007669"/>
    <property type="project" value="TreeGrafter"/>
</dbReference>
<dbReference type="GO" id="GO:0035282">
    <property type="term" value="P:segmentation"/>
    <property type="evidence" value="ECO:0007669"/>
    <property type="project" value="UniProtKB-KW"/>
</dbReference>
<dbReference type="FunFam" id="3.30.160.60:FF:002343">
    <property type="entry name" value="Zinc finger protein 33A"/>
    <property type="match status" value="1"/>
</dbReference>
<dbReference type="FunFam" id="3.30.160.60:FF:000912">
    <property type="entry name" value="Zinc finger protein 660"/>
    <property type="match status" value="1"/>
</dbReference>
<dbReference type="Gene3D" id="3.30.160.60">
    <property type="entry name" value="Classic Zinc Finger"/>
    <property type="match status" value="3"/>
</dbReference>
<dbReference type="InterPro" id="IPR050331">
    <property type="entry name" value="Zinc_finger"/>
</dbReference>
<dbReference type="InterPro" id="IPR036236">
    <property type="entry name" value="Znf_C2H2_sf"/>
</dbReference>
<dbReference type="InterPro" id="IPR013087">
    <property type="entry name" value="Znf_C2H2_type"/>
</dbReference>
<dbReference type="PANTHER" id="PTHR16515:SF49">
    <property type="entry name" value="GASTRULA ZINC FINGER PROTEIN XLCGF49.1-LIKE-RELATED"/>
    <property type="match status" value="1"/>
</dbReference>
<dbReference type="PANTHER" id="PTHR16515">
    <property type="entry name" value="PR DOMAIN ZINC FINGER PROTEIN"/>
    <property type="match status" value="1"/>
</dbReference>
<dbReference type="Pfam" id="PF00096">
    <property type="entry name" value="zf-C2H2"/>
    <property type="match status" value="2"/>
</dbReference>
<dbReference type="SMART" id="SM00355">
    <property type="entry name" value="ZnF_C2H2"/>
    <property type="match status" value="2"/>
</dbReference>
<dbReference type="SUPFAM" id="SSF57667">
    <property type="entry name" value="beta-beta-alpha zinc fingers"/>
    <property type="match status" value="1"/>
</dbReference>
<dbReference type="PROSITE" id="PS00028">
    <property type="entry name" value="ZINC_FINGER_C2H2_1"/>
    <property type="match status" value="2"/>
</dbReference>
<dbReference type="PROSITE" id="PS50157">
    <property type="entry name" value="ZINC_FINGER_C2H2_2"/>
    <property type="match status" value="2"/>
</dbReference>
<sequence length="76" mass="9105">HERTHTGEKPFECSECHKRFTRDHHLKTHLRLHTGEKPYSCPHCPRHFVQVANLRRHLRVHTGERPYACARCPARF</sequence>
<evidence type="ECO:0000255" key="1">
    <source>
        <dbReference type="PROSITE-ProRule" id="PRU00042"/>
    </source>
</evidence>
<evidence type="ECO:0000305" key="2"/>
<reference key="1">
    <citation type="journal article" date="1994" name="Proc. Natl. Acad. Sci. U.S.A.">
        <title>Drosophila mode of metamerization in the embryogenesis of the lepidopteran insect Manduca sexta.</title>
        <authorList>
            <person name="Kraft R."/>
            <person name="Jaeckle H."/>
        </authorList>
    </citation>
    <scope>NUCLEOTIDE SEQUENCE [GENOMIC DNA]</scope>
    <source>
        <tissue>Embryo</tissue>
    </source>
</reference>
<comment type="function">
    <text>Krueppel is a gap class segmentation protein.</text>
</comment>
<comment type="subcellular location">
    <subcellularLocation>
        <location evidence="2">Nucleus</location>
    </subcellularLocation>
</comment>
<comment type="developmental stage">
    <text>Expressed initially in the central region of the blastoderm embryo.</text>
</comment>
<comment type="similarity">
    <text evidence="2">Belongs to the krueppel C2H2-type zinc-finger protein family.</text>
</comment>
<keyword id="KW-0217">Developmental protein</keyword>
<keyword id="KW-0238">DNA-binding</keyword>
<keyword id="KW-0302">Gap protein</keyword>
<keyword id="KW-0479">Metal-binding</keyword>
<keyword id="KW-0539">Nucleus</keyword>
<keyword id="KW-0677">Repeat</keyword>
<keyword id="KW-0862">Zinc</keyword>
<keyword id="KW-0863">Zinc-finger</keyword>
<gene>
    <name type="primary">Kr</name>
</gene>
<proteinExistence type="evidence at transcript level"/>
<organism>
    <name type="scientific">Manduca sexta</name>
    <name type="common">Tobacco hawkmoth</name>
    <name type="synonym">Tobacco hornworm</name>
    <dbReference type="NCBI Taxonomy" id="7130"/>
    <lineage>
        <taxon>Eukaryota</taxon>
        <taxon>Metazoa</taxon>
        <taxon>Ecdysozoa</taxon>
        <taxon>Arthropoda</taxon>
        <taxon>Hexapoda</taxon>
        <taxon>Insecta</taxon>
        <taxon>Pterygota</taxon>
        <taxon>Neoptera</taxon>
        <taxon>Endopterygota</taxon>
        <taxon>Lepidoptera</taxon>
        <taxon>Glossata</taxon>
        <taxon>Ditrysia</taxon>
        <taxon>Bombycoidea</taxon>
        <taxon>Sphingidae</taxon>
        <taxon>Sphinginae</taxon>
        <taxon>Sphingini</taxon>
        <taxon>Manduca</taxon>
    </lineage>
</organism>
<feature type="chain" id="PRO_0000046997" description="Protein krueppel">
    <location>
        <begin position="1" status="less than"/>
        <end position="76" status="greater than"/>
    </location>
</feature>
<feature type="zinc finger region" description="C2H2-type 1" evidence="1">
    <location>
        <begin position="11"/>
        <end position="33"/>
    </location>
</feature>
<feature type="zinc finger region" description="C2H2-type 2" evidence="1">
    <location>
        <begin position="39"/>
        <end position="61"/>
    </location>
</feature>
<feature type="non-terminal residue">
    <location>
        <position position="1"/>
    </location>
</feature>
<feature type="non-terminal residue">
    <location>
        <position position="76"/>
    </location>
</feature>
<accession>Q25515</accession>